<dbReference type="EC" id="2.8.1.8" evidence="1"/>
<dbReference type="EMBL" id="CP000377">
    <property type="protein sequence ID" value="ABF64104.1"/>
    <property type="status" value="ALT_INIT"/>
    <property type="molecule type" value="Genomic_DNA"/>
</dbReference>
<dbReference type="RefSeq" id="WP_044027117.1">
    <property type="nucleotide sequence ID" value="NC_008044.1"/>
</dbReference>
<dbReference type="SMR" id="Q1GGW2"/>
<dbReference type="STRING" id="292414.TM1040_1371"/>
<dbReference type="KEGG" id="sit:TM1040_1371"/>
<dbReference type="eggNOG" id="COG0320">
    <property type="taxonomic scope" value="Bacteria"/>
</dbReference>
<dbReference type="HOGENOM" id="CLU_033144_2_1_5"/>
<dbReference type="OrthoDB" id="9787898at2"/>
<dbReference type="UniPathway" id="UPA00538">
    <property type="reaction ID" value="UER00593"/>
</dbReference>
<dbReference type="Proteomes" id="UP000000636">
    <property type="component" value="Chromosome"/>
</dbReference>
<dbReference type="GO" id="GO:0005737">
    <property type="term" value="C:cytoplasm"/>
    <property type="evidence" value="ECO:0007669"/>
    <property type="project" value="UniProtKB-SubCell"/>
</dbReference>
<dbReference type="GO" id="GO:0051539">
    <property type="term" value="F:4 iron, 4 sulfur cluster binding"/>
    <property type="evidence" value="ECO:0007669"/>
    <property type="project" value="UniProtKB-UniRule"/>
</dbReference>
<dbReference type="GO" id="GO:0016992">
    <property type="term" value="F:lipoate synthase activity"/>
    <property type="evidence" value="ECO:0007669"/>
    <property type="project" value="UniProtKB-UniRule"/>
</dbReference>
<dbReference type="GO" id="GO:0046872">
    <property type="term" value="F:metal ion binding"/>
    <property type="evidence" value="ECO:0007669"/>
    <property type="project" value="UniProtKB-KW"/>
</dbReference>
<dbReference type="CDD" id="cd01335">
    <property type="entry name" value="Radical_SAM"/>
    <property type="match status" value="1"/>
</dbReference>
<dbReference type="FunFam" id="3.20.20.70:FF:000040">
    <property type="entry name" value="Lipoyl synthase"/>
    <property type="match status" value="1"/>
</dbReference>
<dbReference type="Gene3D" id="3.20.20.70">
    <property type="entry name" value="Aldolase class I"/>
    <property type="match status" value="1"/>
</dbReference>
<dbReference type="HAMAP" id="MF_00206">
    <property type="entry name" value="Lipoyl_synth"/>
    <property type="match status" value="1"/>
</dbReference>
<dbReference type="InterPro" id="IPR013785">
    <property type="entry name" value="Aldolase_TIM"/>
</dbReference>
<dbReference type="InterPro" id="IPR006638">
    <property type="entry name" value="Elp3/MiaA/NifB-like_rSAM"/>
</dbReference>
<dbReference type="InterPro" id="IPR031691">
    <property type="entry name" value="LIAS_N"/>
</dbReference>
<dbReference type="InterPro" id="IPR003698">
    <property type="entry name" value="Lipoyl_synth"/>
</dbReference>
<dbReference type="InterPro" id="IPR007197">
    <property type="entry name" value="rSAM"/>
</dbReference>
<dbReference type="NCBIfam" id="TIGR00510">
    <property type="entry name" value="lipA"/>
    <property type="match status" value="1"/>
</dbReference>
<dbReference type="NCBIfam" id="NF004019">
    <property type="entry name" value="PRK05481.1"/>
    <property type="match status" value="1"/>
</dbReference>
<dbReference type="NCBIfam" id="NF009544">
    <property type="entry name" value="PRK12928.1"/>
    <property type="match status" value="1"/>
</dbReference>
<dbReference type="PANTHER" id="PTHR10949">
    <property type="entry name" value="LIPOYL SYNTHASE"/>
    <property type="match status" value="1"/>
</dbReference>
<dbReference type="PANTHER" id="PTHR10949:SF0">
    <property type="entry name" value="LIPOYL SYNTHASE, MITOCHONDRIAL"/>
    <property type="match status" value="1"/>
</dbReference>
<dbReference type="Pfam" id="PF16881">
    <property type="entry name" value="LIAS_N"/>
    <property type="match status" value="1"/>
</dbReference>
<dbReference type="Pfam" id="PF04055">
    <property type="entry name" value="Radical_SAM"/>
    <property type="match status" value="1"/>
</dbReference>
<dbReference type="PIRSF" id="PIRSF005963">
    <property type="entry name" value="Lipoyl_synth"/>
    <property type="match status" value="1"/>
</dbReference>
<dbReference type="SFLD" id="SFLDF00271">
    <property type="entry name" value="lipoyl_synthase"/>
    <property type="match status" value="1"/>
</dbReference>
<dbReference type="SFLD" id="SFLDS00029">
    <property type="entry name" value="Radical_SAM"/>
    <property type="match status" value="1"/>
</dbReference>
<dbReference type="SMART" id="SM00729">
    <property type="entry name" value="Elp3"/>
    <property type="match status" value="1"/>
</dbReference>
<dbReference type="SUPFAM" id="SSF102114">
    <property type="entry name" value="Radical SAM enzymes"/>
    <property type="match status" value="1"/>
</dbReference>
<dbReference type="PROSITE" id="PS51918">
    <property type="entry name" value="RADICAL_SAM"/>
    <property type="match status" value="1"/>
</dbReference>
<accession>Q1GGW2</accession>
<proteinExistence type="inferred from homology"/>
<evidence type="ECO:0000255" key="1">
    <source>
        <dbReference type="HAMAP-Rule" id="MF_00206"/>
    </source>
</evidence>
<evidence type="ECO:0000255" key="2">
    <source>
        <dbReference type="PROSITE-ProRule" id="PRU01266"/>
    </source>
</evidence>
<evidence type="ECO:0000256" key="3">
    <source>
        <dbReference type="SAM" id="MobiDB-lite"/>
    </source>
</evidence>
<evidence type="ECO:0000305" key="4"/>
<sequence>MRDLKIPEQRHPEKAHRPDNAQPKKPSWIRVKAPGGKGYAETHKIMRENNLVTVCEEAGCPNVGECWSQGHATMMIMGEICTRGCTFCNIATGRPDTLDAFEPGRVAHAVQKLGLNHVVITSVDRDDLEDGGADHFAQTIRAVRHRSPQTTIEILTPDFLKCAPEVLETVVEAKPDVFNHNLETVPGLYPEVRPGARYFHSLRLLQRVKELDPSIFTKSGIMVGLGEQAPQVKQVMDDMRAADVDFLTIGQYLQPTPKHHAVDRFVTPEEFESYEKAAYGKGFLMVSATPLTRSSYHAGDDFAKLRAARNAKLGLA</sequence>
<feature type="chain" id="PRO_0000325310" description="Lipoyl synthase">
    <location>
        <begin position="1"/>
        <end position="316"/>
    </location>
</feature>
<feature type="domain" description="Radical SAM core" evidence="2">
    <location>
        <begin position="67"/>
        <end position="284"/>
    </location>
</feature>
<feature type="region of interest" description="Disordered" evidence="3">
    <location>
        <begin position="1"/>
        <end position="31"/>
    </location>
</feature>
<feature type="compositionally biased region" description="Basic and acidic residues" evidence="3">
    <location>
        <begin position="1"/>
        <end position="19"/>
    </location>
</feature>
<feature type="binding site" evidence="1">
    <location>
        <position position="55"/>
    </location>
    <ligand>
        <name>[4Fe-4S] cluster</name>
        <dbReference type="ChEBI" id="CHEBI:49883"/>
        <label>1</label>
    </ligand>
</feature>
<feature type="binding site" evidence="1">
    <location>
        <position position="60"/>
    </location>
    <ligand>
        <name>[4Fe-4S] cluster</name>
        <dbReference type="ChEBI" id="CHEBI:49883"/>
        <label>1</label>
    </ligand>
</feature>
<feature type="binding site" evidence="1">
    <location>
        <position position="66"/>
    </location>
    <ligand>
        <name>[4Fe-4S] cluster</name>
        <dbReference type="ChEBI" id="CHEBI:49883"/>
        <label>1</label>
    </ligand>
</feature>
<feature type="binding site" evidence="1">
    <location>
        <position position="81"/>
    </location>
    <ligand>
        <name>[4Fe-4S] cluster</name>
        <dbReference type="ChEBI" id="CHEBI:49883"/>
        <label>2</label>
        <note>4Fe-4S-S-AdoMet</note>
    </ligand>
</feature>
<feature type="binding site" evidence="1">
    <location>
        <position position="85"/>
    </location>
    <ligand>
        <name>[4Fe-4S] cluster</name>
        <dbReference type="ChEBI" id="CHEBI:49883"/>
        <label>2</label>
        <note>4Fe-4S-S-AdoMet</note>
    </ligand>
</feature>
<feature type="binding site" evidence="1">
    <location>
        <position position="88"/>
    </location>
    <ligand>
        <name>[4Fe-4S] cluster</name>
        <dbReference type="ChEBI" id="CHEBI:49883"/>
        <label>2</label>
        <note>4Fe-4S-S-AdoMet</note>
    </ligand>
</feature>
<feature type="binding site" evidence="1">
    <location>
        <position position="295"/>
    </location>
    <ligand>
        <name>[4Fe-4S] cluster</name>
        <dbReference type="ChEBI" id="CHEBI:49883"/>
        <label>1</label>
    </ligand>
</feature>
<protein>
    <recommendedName>
        <fullName evidence="1">Lipoyl synthase</fullName>
        <ecNumber evidence="1">2.8.1.8</ecNumber>
    </recommendedName>
    <alternativeName>
        <fullName evidence="1">Lip-syn</fullName>
        <shortName evidence="1">LS</shortName>
    </alternativeName>
    <alternativeName>
        <fullName evidence="1">Lipoate synthase</fullName>
    </alternativeName>
    <alternativeName>
        <fullName evidence="1">Lipoic acid synthase</fullName>
    </alternativeName>
    <alternativeName>
        <fullName evidence="1">Sulfur insertion protein LipA</fullName>
    </alternativeName>
</protein>
<organism>
    <name type="scientific">Ruegeria sp. (strain TM1040)</name>
    <name type="common">Silicibacter sp.</name>
    <dbReference type="NCBI Taxonomy" id="292414"/>
    <lineage>
        <taxon>Bacteria</taxon>
        <taxon>Pseudomonadati</taxon>
        <taxon>Pseudomonadota</taxon>
        <taxon>Alphaproteobacteria</taxon>
        <taxon>Rhodobacterales</taxon>
        <taxon>Roseobacteraceae</taxon>
        <taxon>Ruegeria</taxon>
    </lineage>
</organism>
<gene>
    <name evidence="1" type="primary">lipA</name>
    <name type="ordered locus">TM1040_1371</name>
</gene>
<reference key="1">
    <citation type="submission" date="2006-05" db="EMBL/GenBank/DDBJ databases">
        <title>Complete sequence of chromosome of Silicibacter sp. TM1040.</title>
        <authorList>
            <consortium name="US DOE Joint Genome Institute"/>
            <person name="Copeland A."/>
            <person name="Lucas S."/>
            <person name="Lapidus A."/>
            <person name="Barry K."/>
            <person name="Detter J.C."/>
            <person name="Glavina del Rio T."/>
            <person name="Hammon N."/>
            <person name="Israni S."/>
            <person name="Dalin E."/>
            <person name="Tice H."/>
            <person name="Pitluck S."/>
            <person name="Brettin T."/>
            <person name="Bruce D."/>
            <person name="Han C."/>
            <person name="Tapia R."/>
            <person name="Goodwin L."/>
            <person name="Thompson L.S."/>
            <person name="Gilna P."/>
            <person name="Schmutz J."/>
            <person name="Larimer F."/>
            <person name="Land M."/>
            <person name="Hauser L."/>
            <person name="Kyrpides N."/>
            <person name="Kim E."/>
            <person name="Belas R."/>
            <person name="Moran M.A."/>
            <person name="Buchan A."/>
            <person name="Gonzalez J.M."/>
            <person name="Schell M.A."/>
            <person name="Sun F."/>
            <person name="Richardson P."/>
        </authorList>
    </citation>
    <scope>NUCLEOTIDE SEQUENCE [LARGE SCALE GENOMIC DNA]</scope>
    <source>
        <strain>TM1040</strain>
    </source>
</reference>
<keyword id="KW-0004">4Fe-4S</keyword>
<keyword id="KW-0963">Cytoplasm</keyword>
<keyword id="KW-0408">Iron</keyword>
<keyword id="KW-0411">Iron-sulfur</keyword>
<keyword id="KW-0479">Metal-binding</keyword>
<keyword id="KW-1185">Reference proteome</keyword>
<keyword id="KW-0949">S-adenosyl-L-methionine</keyword>
<keyword id="KW-0808">Transferase</keyword>
<name>LIPA_RUEST</name>
<comment type="function">
    <text evidence="1">Catalyzes the radical-mediated insertion of two sulfur atoms into the C-6 and C-8 positions of the octanoyl moiety bound to the lipoyl domains of lipoate-dependent enzymes, thereby converting the octanoylated domains into lipoylated derivatives.</text>
</comment>
<comment type="catalytic activity">
    <reaction evidence="1">
        <text>[[Fe-S] cluster scaffold protein carrying a second [4Fe-4S](2+) cluster] + N(6)-octanoyl-L-lysyl-[protein] + 2 oxidized [2Fe-2S]-[ferredoxin] + 2 S-adenosyl-L-methionine + 4 H(+) = [[Fe-S] cluster scaffold protein] + N(6)-[(R)-dihydrolipoyl]-L-lysyl-[protein] + 4 Fe(3+) + 2 hydrogen sulfide + 2 5'-deoxyadenosine + 2 L-methionine + 2 reduced [2Fe-2S]-[ferredoxin]</text>
        <dbReference type="Rhea" id="RHEA:16585"/>
        <dbReference type="Rhea" id="RHEA-COMP:9928"/>
        <dbReference type="Rhea" id="RHEA-COMP:10000"/>
        <dbReference type="Rhea" id="RHEA-COMP:10001"/>
        <dbReference type="Rhea" id="RHEA-COMP:10475"/>
        <dbReference type="Rhea" id="RHEA-COMP:14568"/>
        <dbReference type="Rhea" id="RHEA-COMP:14569"/>
        <dbReference type="ChEBI" id="CHEBI:15378"/>
        <dbReference type="ChEBI" id="CHEBI:17319"/>
        <dbReference type="ChEBI" id="CHEBI:29034"/>
        <dbReference type="ChEBI" id="CHEBI:29919"/>
        <dbReference type="ChEBI" id="CHEBI:33722"/>
        <dbReference type="ChEBI" id="CHEBI:33737"/>
        <dbReference type="ChEBI" id="CHEBI:33738"/>
        <dbReference type="ChEBI" id="CHEBI:57844"/>
        <dbReference type="ChEBI" id="CHEBI:59789"/>
        <dbReference type="ChEBI" id="CHEBI:78809"/>
        <dbReference type="ChEBI" id="CHEBI:83100"/>
        <dbReference type="EC" id="2.8.1.8"/>
    </reaction>
</comment>
<comment type="cofactor">
    <cofactor evidence="1">
        <name>[4Fe-4S] cluster</name>
        <dbReference type="ChEBI" id="CHEBI:49883"/>
    </cofactor>
    <text evidence="1">Binds 2 [4Fe-4S] clusters per subunit. One cluster is coordinated with 3 cysteines and an exchangeable S-adenosyl-L-methionine.</text>
</comment>
<comment type="pathway">
    <text evidence="1">Protein modification; protein lipoylation via endogenous pathway; protein N(6)-(lipoyl)lysine from octanoyl-[acyl-carrier-protein]: step 2/2.</text>
</comment>
<comment type="subcellular location">
    <subcellularLocation>
        <location evidence="1">Cytoplasm</location>
    </subcellularLocation>
</comment>
<comment type="similarity">
    <text evidence="1">Belongs to the radical SAM superfamily. Lipoyl synthase family.</text>
</comment>
<comment type="sequence caution" evidence="4">
    <conflict type="erroneous initiation">
        <sequence resource="EMBL-CDS" id="ABF64104"/>
    </conflict>
</comment>